<proteinExistence type="inferred from homology"/>
<accession>Q5HMA4</accession>
<gene>
    <name evidence="1" type="primary">prfA</name>
    <name type="ordered locus">SERP1725</name>
</gene>
<organism>
    <name type="scientific">Staphylococcus epidermidis (strain ATCC 35984 / DSM 28319 / BCRC 17069 / CCUG 31568 / BM 3577 / RP62A)</name>
    <dbReference type="NCBI Taxonomy" id="176279"/>
    <lineage>
        <taxon>Bacteria</taxon>
        <taxon>Bacillati</taxon>
        <taxon>Bacillota</taxon>
        <taxon>Bacilli</taxon>
        <taxon>Bacillales</taxon>
        <taxon>Staphylococcaceae</taxon>
        <taxon>Staphylococcus</taxon>
    </lineage>
</organism>
<dbReference type="EMBL" id="CP000029">
    <property type="protein sequence ID" value="AAW55039.1"/>
    <property type="molecule type" value="Genomic_DNA"/>
</dbReference>
<dbReference type="RefSeq" id="WP_001829940.1">
    <property type="nucleotide sequence ID" value="NC_002976.3"/>
</dbReference>
<dbReference type="SMR" id="Q5HMA4"/>
<dbReference type="STRING" id="176279.SERP1725"/>
<dbReference type="GeneID" id="50018184"/>
<dbReference type="KEGG" id="ser:SERP1725"/>
<dbReference type="eggNOG" id="COG0216">
    <property type="taxonomic scope" value="Bacteria"/>
</dbReference>
<dbReference type="HOGENOM" id="CLU_036856_0_1_9"/>
<dbReference type="Proteomes" id="UP000000531">
    <property type="component" value="Chromosome"/>
</dbReference>
<dbReference type="GO" id="GO:0005737">
    <property type="term" value="C:cytoplasm"/>
    <property type="evidence" value="ECO:0007669"/>
    <property type="project" value="UniProtKB-SubCell"/>
</dbReference>
<dbReference type="GO" id="GO:0016149">
    <property type="term" value="F:translation release factor activity, codon specific"/>
    <property type="evidence" value="ECO:0007669"/>
    <property type="project" value="UniProtKB-UniRule"/>
</dbReference>
<dbReference type="FunFam" id="3.30.160.20:FF:000004">
    <property type="entry name" value="Peptide chain release factor 1"/>
    <property type="match status" value="1"/>
</dbReference>
<dbReference type="FunFam" id="3.30.70.1660:FF:000002">
    <property type="entry name" value="Peptide chain release factor 1"/>
    <property type="match status" value="1"/>
</dbReference>
<dbReference type="FunFam" id="3.30.70.1660:FF:000004">
    <property type="entry name" value="Peptide chain release factor 1"/>
    <property type="match status" value="1"/>
</dbReference>
<dbReference type="Gene3D" id="3.30.160.20">
    <property type="match status" value="1"/>
</dbReference>
<dbReference type="Gene3D" id="3.30.70.1660">
    <property type="match status" value="1"/>
</dbReference>
<dbReference type="Gene3D" id="6.10.140.1950">
    <property type="match status" value="1"/>
</dbReference>
<dbReference type="HAMAP" id="MF_00093">
    <property type="entry name" value="Rel_fac_1"/>
    <property type="match status" value="1"/>
</dbReference>
<dbReference type="InterPro" id="IPR005139">
    <property type="entry name" value="PCRF"/>
</dbReference>
<dbReference type="InterPro" id="IPR000352">
    <property type="entry name" value="Pep_chain_release_fac_I"/>
</dbReference>
<dbReference type="InterPro" id="IPR045853">
    <property type="entry name" value="Pep_chain_release_fac_I_sf"/>
</dbReference>
<dbReference type="InterPro" id="IPR050057">
    <property type="entry name" value="Prokaryotic/Mito_RF"/>
</dbReference>
<dbReference type="InterPro" id="IPR004373">
    <property type="entry name" value="RF-1"/>
</dbReference>
<dbReference type="NCBIfam" id="TIGR00019">
    <property type="entry name" value="prfA"/>
    <property type="match status" value="1"/>
</dbReference>
<dbReference type="NCBIfam" id="NF001859">
    <property type="entry name" value="PRK00591.1"/>
    <property type="match status" value="1"/>
</dbReference>
<dbReference type="PANTHER" id="PTHR43804">
    <property type="entry name" value="LD18447P"/>
    <property type="match status" value="1"/>
</dbReference>
<dbReference type="PANTHER" id="PTHR43804:SF7">
    <property type="entry name" value="LD18447P"/>
    <property type="match status" value="1"/>
</dbReference>
<dbReference type="Pfam" id="PF03462">
    <property type="entry name" value="PCRF"/>
    <property type="match status" value="1"/>
</dbReference>
<dbReference type="Pfam" id="PF00472">
    <property type="entry name" value="RF-1"/>
    <property type="match status" value="1"/>
</dbReference>
<dbReference type="SMART" id="SM00937">
    <property type="entry name" value="PCRF"/>
    <property type="match status" value="1"/>
</dbReference>
<dbReference type="SUPFAM" id="SSF75620">
    <property type="entry name" value="Release factor"/>
    <property type="match status" value="1"/>
</dbReference>
<dbReference type="PROSITE" id="PS00745">
    <property type="entry name" value="RF_PROK_I"/>
    <property type="match status" value="1"/>
</dbReference>
<name>RF1_STAEQ</name>
<reference key="1">
    <citation type="journal article" date="2005" name="J. Bacteriol.">
        <title>Insights on evolution of virulence and resistance from the complete genome analysis of an early methicillin-resistant Staphylococcus aureus strain and a biofilm-producing methicillin-resistant Staphylococcus epidermidis strain.</title>
        <authorList>
            <person name="Gill S.R."/>
            <person name="Fouts D.E."/>
            <person name="Archer G.L."/>
            <person name="Mongodin E.F."/>
            <person name="DeBoy R.T."/>
            <person name="Ravel J."/>
            <person name="Paulsen I.T."/>
            <person name="Kolonay J.F."/>
            <person name="Brinkac L.M."/>
            <person name="Beanan M.J."/>
            <person name="Dodson R.J."/>
            <person name="Daugherty S.C."/>
            <person name="Madupu R."/>
            <person name="Angiuoli S.V."/>
            <person name="Durkin A.S."/>
            <person name="Haft D.H."/>
            <person name="Vamathevan J.J."/>
            <person name="Khouri H."/>
            <person name="Utterback T.R."/>
            <person name="Lee C."/>
            <person name="Dimitrov G."/>
            <person name="Jiang L."/>
            <person name="Qin H."/>
            <person name="Weidman J."/>
            <person name="Tran K."/>
            <person name="Kang K.H."/>
            <person name="Hance I.R."/>
            <person name="Nelson K.E."/>
            <person name="Fraser C.M."/>
        </authorList>
    </citation>
    <scope>NUCLEOTIDE SEQUENCE [LARGE SCALE GENOMIC DNA]</scope>
    <source>
        <strain>ATCC 35984 / DSM 28319 / BCRC 17069 / CCUG 31568 / BM 3577 / RP62A</strain>
    </source>
</reference>
<keyword id="KW-0963">Cytoplasm</keyword>
<keyword id="KW-0488">Methylation</keyword>
<keyword id="KW-0648">Protein biosynthesis</keyword>
<keyword id="KW-1185">Reference proteome</keyword>
<sequence length="358" mass="40378">MFDQLDIVEERYEQLNELLSDPDVVNDADKLRKYSKEQADLQKTVDVYRSYKTKKEELQDIEDMLNETSDKEEVEMLKEESSALKTELPDMEEELKILLIPKDPNDDKDVIVEIRAAAGGDEAAIFAGDLMRMYSKYAEANGFKTEIVEASESDHGGYKEVSFSVSGTGAYSKLKFENGAHRVQRVPETESGGRIHTSTATVAVLPEAEDVEIEIRNEDLKIDTYRSSGAGGQHVNTTDSAVRITHLPTGVIATSSEKSQIQNREKAMKVLKARLYDMKLQEEQQKYASQRKSAVGTGDRSERIRTYNYPQSRVTDHRIGLTLQKLNQIMEGNLDEIVEALTLSEQTEKLKELNNGEL</sequence>
<evidence type="ECO:0000255" key="1">
    <source>
        <dbReference type="HAMAP-Rule" id="MF_00093"/>
    </source>
</evidence>
<comment type="function">
    <text evidence="1">Peptide chain release factor 1 directs the termination of translation in response to the peptide chain termination codons UAG and UAA.</text>
</comment>
<comment type="subcellular location">
    <subcellularLocation>
        <location evidence="1">Cytoplasm</location>
    </subcellularLocation>
</comment>
<comment type="PTM">
    <text evidence="1">Methylated by PrmC. Methylation increases the termination efficiency of RF1.</text>
</comment>
<comment type="similarity">
    <text evidence="1">Belongs to the prokaryotic/mitochondrial release factor family.</text>
</comment>
<feature type="chain" id="PRO_0000177744" description="Peptide chain release factor 1">
    <location>
        <begin position="1"/>
        <end position="358"/>
    </location>
</feature>
<feature type="modified residue" description="N5-methylglutamine" evidence="1">
    <location>
        <position position="233"/>
    </location>
</feature>
<protein>
    <recommendedName>
        <fullName evidence="1">Peptide chain release factor 1</fullName>
        <shortName evidence="1">RF-1</shortName>
    </recommendedName>
</protein>